<gene>
    <name evidence="1" type="primary">yhbP</name>
    <name type="ordered locus">Z4514</name>
    <name type="ordered locus">ECs4035</name>
</gene>
<reference key="1">
    <citation type="journal article" date="2001" name="Nature">
        <title>Genome sequence of enterohaemorrhagic Escherichia coli O157:H7.</title>
        <authorList>
            <person name="Perna N.T."/>
            <person name="Plunkett G. III"/>
            <person name="Burland V."/>
            <person name="Mau B."/>
            <person name="Glasner J.D."/>
            <person name="Rose D.J."/>
            <person name="Mayhew G.F."/>
            <person name="Evans P.S."/>
            <person name="Gregor J."/>
            <person name="Kirkpatrick H.A."/>
            <person name="Posfai G."/>
            <person name="Hackett J."/>
            <person name="Klink S."/>
            <person name="Boutin A."/>
            <person name="Shao Y."/>
            <person name="Miller L."/>
            <person name="Grotbeck E.J."/>
            <person name="Davis N.W."/>
            <person name="Lim A."/>
            <person name="Dimalanta E.T."/>
            <person name="Potamousis K."/>
            <person name="Apodaca J."/>
            <person name="Anantharaman T.S."/>
            <person name="Lin J."/>
            <person name="Yen G."/>
            <person name="Schwartz D.C."/>
            <person name="Welch R.A."/>
            <person name="Blattner F.R."/>
        </authorList>
    </citation>
    <scope>NUCLEOTIDE SEQUENCE [LARGE SCALE GENOMIC DNA]</scope>
    <source>
        <strain>O157:H7 / EDL933 / ATCC 700927 / EHEC</strain>
    </source>
</reference>
<reference key="2">
    <citation type="journal article" date="2001" name="DNA Res.">
        <title>Complete genome sequence of enterohemorrhagic Escherichia coli O157:H7 and genomic comparison with a laboratory strain K-12.</title>
        <authorList>
            <person name="Hayashi T."/>
            <person name="Makino K."/>
            <person name="Ohnishi M."/>
            <person name="Kurokawa K."/>
            <person name="Ishii K."/>
            <person name="Yokoyama K."/>
            <person name="Han C.-G."/>
            <person name="Ohtsubo E."/>
            <person name="Nakayama K."/>
            <person name="Murata T."/>
            <person name="Tanaka M."/>
            <person name="Tobe T."/>
            <person name="Iida T."/>
            <person name="Takami H."/>
            <person name="Honda T."/>
            <person name="Sasakawa C."/>
            <person name="Ogasawara N."/>
            <person name="Yasunaga T."/>
            <person name="Kuhara S."/>
            <person name="Shiba T."/>
            <person name="Hattori M."/>
            <person name="Shinagawa H."/>
        </authorList>
    </citation>
    <scope>NUCLEOTIDE SEQUENCE [LARGE SCALE GENOMIC DNA]</scope>
    <source>
        <strain>O157:H7 / Sakai / RIMD 0509952 / EHEC</strain>
    </source>
</reference>
<keyword id="KW-1185">Reference proteome</keyword>
<accession>Q8XA94</accession>
<sequence length="147" mass="16718">METLTAISRWLAKQHVVTWCVQQEGELWCANAFYLFDVQKVAFYILTEEKTRHAQMSGPQAAVAGTVNGQPKTVALIRGVQFKGEIRRLEGEESDLARKAYNRRFPVARMLSAPVWEIRPDEIKFTDNTLGFGKKMIWLRGSGTEQA</sequence>
<feature type="chain" id="PRO_0000214866" description="UPF0306 protein YhbP">
    <location>
        <begin position="1"/>
        <end position="147"/>
    </location>
</feature>
<organism>
    <name type="scientific">Escherichia coli O157:H7</name>
    <dbReference type="NCBI Taxonomy" id="83334"/>
    <lineage>
        <taxon>Bacteria</taxon>
        <taxon>Pseudomonadati</taxon>
        <taxon>Pseudomonadota</taxon>
        <taxon>Gammaproteobacteria</taxon>
        <taxon>Enterobacterales</taxon>
        <taxon>Enterobacteriaceae</taxon>
        <taxon>Escherichia</taxon>
    </lineage>
</organism>
<comment type="similarity">
    <text evidence="1">Belongs to the UPF0306 family.</text>
</comment>
<name>YHBP_ECO57</name>
<proteinExistence type="inferred from homology"/>
<protein>
    <recommendedName>
        <fullName evidence="1">UPF0306 protein YhbP</fullName>
    </recommendedName>
</protein>
<evidence type="ECO:0000255" key="1">
    <source>
        <dbReference type="HAMAP-Rule" id="MF_00764"/>
    </source>
</evidence>
<dbReference type="EMBL" id="AE005174">
    <property type="protein sequence ID" value="AAG58290.1"/>
    <property type="molecule type" value="Genomic_DNA"/>
</dbReference>
<dbReference type="EMBL" id="BA000007">
    <property type="protein sequence ID" value="BAB37458.1"/>
    <property type="molecule type" value="Genomic_DNA"/>
</dbReference>
<dbReference type="PIR" id="C91133">
    <property type="entry name" value="C91133"/>
</dbReference>
<dbReference type="PIR" id="F85978">
    <property type="entry name" value="F85978"/>
</dbReference>
<dbReference type="RefSeq" id="NP_312062.1">
    <property type="nucleotide sequence ID" value="NC_002695.1"/>
</dbReference>
<dbReference type="RefSeq" id="WP_000449463.1">
    <property type="nucleotide sequence ID" value="NZ_VOAI01000014.1"/>
</dbReference>
<dbReference type="SMR" id="Q8XA94"/>
<dbReference type="STRING" id="155864.Z4514"/>
<dbReference type="GeneID" id="916126"/>
<dbReference type="KEGG" id="ece:Z4514"/>
<dbReference type="KEGG" id="ecs:ECs_4035"/>
<dbReference type="PATRIC" id="fig|386585.9.peg.4214"/>
<dbReference type="eggNOG" id="COG3787">
    <property type="taxonomic scope" value="Bacteria"/>
</dbReference>
<dbReference type="HOGENOM" id="CLU_105087_3_0_6"/>
<dbReference type="OMA" id="DLWCANC"/>
<dbReference type="Proteomes" id="UP000000558">
    <property type="component" value="Chromosome"/>
</dbReference>
<dbReference type="Proteomes" id="UP000002519">
    <property type="component" value="Chromosome"/>
</dbReference>
<dbReference type="FunFam" id="2.30.110.10:FF:000003">
    <property type="entry name" value="UPF0306 protein YhbP"/>
    <property type="match status" value="1"/>
</dbReference>
<dbReference type="Gene3D" id="2.30.110.10">
    <property type="entry name" value="Electron Transport, Fmn-binding Protein, Chain A"/>
    <property type="match status" value="1"/>
</dbReference>
<dbReference type="HAMAP" id="MF_00764">
    <property type="entry name" value="UPF0306"/>
    <property type="match status" value="1"/>
</dbReference>
<dbReference type="InterPro" id="IPR012349">
    <property type="entry name" value="Split_barrel_FMN-bd"/>
</dbReference>
<dbReference type="InterPro" id="IPR011194">
    <property type="entry name" value="UPF0306"/>
</dbReference>
<dbReference type="NCBIfam" id="NF002900">
    <property type="entry name" value="PRK03467.1"/>
    <property type="match status" value="1"/>
</dbReference>
<dbReference type="PIRSF" id="PIRSF009554">
    <property type="entry name" value="UCP009554"/>
    <property type="match status" value="1"/>
</dbReference>
<dbReference type="SUPFAM" id="SSF50475">
    <property type="entry name" value="FMN-binding split barrel"/>
    <property type="match status" value="1"/>
</dbReference>